<comment type="function">
    <text evidence="1">F(1)F(0) ATP synthase produces ATP from ADP in the presence of a proton or sodium gradient. F-type ATPases consist of two structural domains, F(1) containing the extramembraneous catalytic core and F(0) containing the membrane proton channel, linked together by a central stalk and a peripheral stalk. During catalysis, ATP synthesis in the catalytic domain of F(1) is coupled via a rotary mechanism of the central stalk subunits to proton translocation.</text>
</comment>
<comment type="function">
    <text evidence="1">Key component of the F(0) channel; it plays a direct role in translocation across the membrane. A homomeric c-ring of between 10-14 subunits forms the central stalk rotor element with the F(1) delta and epsilon subunits.</text>
</comment>
<comment type="subunit">
    <text evidence="1">F-type ATPases have 2 components, F(1) - the catalytic core - and F(0) - the membrane proton channel. F(1) has five subunits: alpha(3), beta(3), gamma(1), delta(1), epsilon(1). F(0) has four main subunits: a(1), b(1), b'(1) and c(10-14). The alpha and beta chains form an alternating ring which encloses part of the gamma chain. F(1) is attached to F(0) by a central stalk formed by the gamma and epsilon chains, while a peripheral stalk is formed by the delta, b and b' chains.</text>
</comment>
<comment type="subcellular location">
    <subcellularLocation>
        <location evidence="1">Plastid</location>
        <location evidence="1">Chloroplast thylakoid membrane</location>
        <topology evidence="1">Multi-pass membrane protein</topology>
    </subcellularLocation>
</comment>
<comment type="RNA editing">
    <location>
        <position position="1" evidence="2 3"/>
    </location>
    <location>
        <position position="11" evidence="2 3"/>
    </location>
    <location>
        <position position="21" evidence="2 3"/>
    </location>
    <location>
        <position position="24" evidence="2 3"/>
    </location>
    <location>
        <position position="34" evidence="2 3"/>
    </location>
    <location>
        <position position="40" evidence="2 3"/>
    </location>
    <location>
        <position position="42" evidence="2 3"/>
    </location>
    <location>
        <position position="53" evidence="2 3"/>
    </location>
    <location>
        <position position="55" evidence="2 3"/>
    </location>
    <location>
        <position position="59" evidence="2 3"/>
    </location>
    <location>
        <position position="70" evidence="2 3"/>
    </location>
    <location>
        <position position="74" evidence="2 3"/>
    </location>
    <location>
        <position position="75" evidence="2 3"/>
    </location>
    <location>
        <position position="76" evidence="2 3"/>
    </location>
    <location>
        <position position="80" evidence="2 3"/>
    </location>
    <text>The initiator methionine is created by RNA editing. The nonsense codons at positions 34 and 42 are modified to sense codons.</text>
</comment>
<comment type="miscellaneous">
    <text>In plastids the F-type ATPase is also known as CF(1)CF(0).</text>
</comment>
<comment type="similarity">
    <text evidence="1">Belongs to the ATPase C chain family.</text>
</comment>
<organism>
    <name type="scientific">Anthoceros angustus</name>
    <name type="common">Hornwort</name>
    <name type="synonym">Anthoceros formosae</name>
    <dbReference type="NCBI Taxonomy" id="48387"/>
    <lineage>
        <taxon>Eukaryota</taxon>
        <taxon>Viridiplantae</taxon>
        <taxon>Streptophyta</taxon>
        <taxon>Embryophyta</taxon>
        <taxon>Anthocerotophyta</taxon>
        <taxon>Anthocerotopsida</taxon>
        <taxon>Anthocerotidae</taxon>
        <taxon>Anthocerotales</taxon>
        <taxon>Anthocerotaceae</taxon>
        <taxon>Anthoceros</taxon>
    </lineage>
</organism>
<reference key="1">
    <citation type="journal article" date="2003" name="Nucleic Acids Res.">
        <title>The complete nucleotide sequence of the hornwort (Anthoceros formosae) chloroplast genome: insight into the earliest land plants.</title>
        <authorList>
            <person name="Kugita M."/>
            <person name="Kaneko A."/>
            <person name="Yamamoto Y."/>
            <person name="Takeya Y."/>
            <person name="Matsumoto T."/>
            <person name="Yoshinaga K."/>
        </authorList>
    </citation>
    <scope>NUCLEOTIDE SEQUENCE [LARGE SCALE GENOMIC DNA]</scope>
    <scope>RNA EDITING</scope>
</reference>
<reference key="2">
    <citation type="journal article" date="2003" name="Nucleic Acids Res.">
        <title>RNA editing in hornwort chloroplasts makes more than half the genes functional.</title>
        <authorList>
            <person name="Kugita M."/>
            <person name="Yamamoto Y."/>
            <person name="Fujikawa T."/>
            <person name="Matsumoto T."/>
            <person name="Yoshinaga K."/>
        </authorList>
    </citation>
    <scope>NUCLEOTIDE SEQUENCE [MRNA]</scope>
    <scope>RNA EDITING</scope>
    <source>
        <tissue>Thallus</tissue>
    </source>
</reference>
<feature type="chain" id="PRO_0000112181" description="ATP synthase subunit c, chloroplastic">
    <location>
        <begin position="1"/>
        <end position="81"/>
    </location>
</feature>
<feature type="transmembrane region" description="Helical" evidence="1">
    <location>
        <begin position="3"/>
        <end position="23"/>
    </location>
</feature>
<feature type="transmembrane region" description="Helical" evidence="1">
    <location>
        <begin position="57"/>
        <end position="77"/>
    </location>
</feature>
<feature type="site" description="Reversibly protonated during proton transport" evidence="1">
    <location>
        <position position="61"/>
    </location>
</feature>
<gene>
    <name evidence="1" type="primary">atpH</name>
</gene>
<protein>
    <recommendedName>
        <fullName evidence="1">ATP synthase subunit c, chloroplastic</fullName>
    </recommendedName>
    <alternativeName>
        <fullName evidence="1">ATP synthase F(0) sector subunit c</fullName>
    </alternativeName>
    <alternativeName>
        <fullName evidence="1">ATPase subunit III</fullName>
    </alternativeName>
    <alternativeName>
        <fullName evidence="1">F-type ATPase subunit c</fullName>
        <shortName evidence="1">F-ATPase subunit c</shortName>
    </alternativeName>
    <alternativeName>
        <fullName evidence="1">Lipid-binding protein</fullName>
    </alternativeName>
</protein>
<evidence type="ECO:0000255" key="1">
    <source>
        <dbReference type="HAMAP-Rule" id="MF_01396"/>
    </source>
</evidence>
<evidence type="ECO:0000269" key="2">
    <source>
    </source>
</evidence>
<evidence type="ECO:0000269" key="3">
    <source>
    </source>
</evidence>
<geneLocation type="chloroplast"/>
<accession>P61172</accession>
<proteinExistence type="evidence at transcript level"/>
<name>ATPH_ANTAG</name>
<dbReference type="EMBL" id="AB086179">
    <property type="protein sequence ID" value="BAC55331.1"/>
    <property type="molecule type" value="Genomic_DNA"/>
</dbReference>
<dbReference type="EMBL" id="AB087423">
    <property type="protein sequence ID" value="BAC55422.1"/>
    <property type="molecule type" value="mRNA"/>
</dbReference>
<dbReference type="RefSeq" id="NP_777395.1">
    <property type="nucleotide sequence ID" value="NC_004543.1"/>
</dbReference>
<dbReference type="SMR" id="P61172"/>
<dbReference type="GeneID" id="2553484"/>
<dbReference type="GO" id="GO:0009535">
    <property type="term" value="C:chloroplast thylakoid membrane"/>
    <property type="evidence" value="ECO:0007669"/>
    <property type="project" value="UniProtKB-SubCell"/>
</dbReference>
<dbReference type="GO" id="GO:0045259">
    <property type="term" value="C:proton-transporting ATP synthase complex"/>
    <property type="evidence" value="ECO:0007669"/>
    <property type="project" value="UniProtKB-KW"/>
</dbReference>
<dbReference type="GO" id="GO:0033177">
    <property type="term" value="C:proton-transporting two-sector ATPase complex, proton-transporting domain"/>
    <property type="evidence" value="ECO:0007669"/>
    <property type="project" value="InterPro"/>
</dbReference>
<dbReference type="GO" id="GO:0008289">
    <property type="term" value="F:lipid binding"/>
    <property type="evidence" value="ECO:0007669"/>
    <property type="project" value="UniProtKB-KW"/>
</dbReference>
<dbReference type="GO" id="GO:0046933">
    <property type="term" value="F:proton-transporting ATP synthase activity, rotational mechanism"/>
    <property type="evidence" value="ECO:0007669"/>
    <property type="project" value="UniProtKB-UniRule"/>
</dbReference>
<dbReference type="CDD" id="cd18183">
    <property type="entry name" value="ATP-synt_Fo_c_ATPH"/>
    <property type="match status" value="1"/>
</dbReference>
<dbReference type="FunFam" id="1.20.20.10:FF:000001">
    <property type="entry name" value="ATP synthase subunit c, chloroplastic"/>
    <property type="match status" value="1"/>
</dbReference>
<dbReference type="Gene3D" id="1.20.20.10">
    <property type="entry name" value="F1F0 ATP synthase subunit C"/>
    <property type="match status" value="1"/>
</dbReference>
<dbReference type="HAMAP" id="MF_01396">
    <property type="entry name" value="ATP_synth_c_bact"/>
    <property type="match status" value="1"/>
</dbReference>
<dbReference type="InterPro" id="IPR005953">
    <property type="entry name" value="ATP_synth_csu_bac/chlpt"/>
</dbReference>
<dbReference type="InterPro" id="IPR000454">
    <property type="entry name" value="ATP_synth_F0_csu"/>
</dbReference>
<dbReference type="InterPro" id="IPR020537">
    <property type="entry name" value="ATP_synth_F0_csu_DDCD_BS"/>
</dbReference>
<dbReference type="InterPro" id="IPR038662">
    <property type="entry name" value="ATP_synth_F0_csu_sf"/>
</dbReference>
<dbReference type="InterPro" id="IPR002379">
    <property type="entry name" value="ATPase_proteolipid_c-like_dom"/>
</dbReference>
<dbReference type="InterPro" id="IPR035921">
    <property type="entry name" value="F/V-ATP_Csub_sf"/>
</dbReference>
<dbReference type="NCBIfam" id="TIGR01260">
    <property type="entry name" value="ATP_synt_c"/>
    <property type="match status" value="1"/>
</dbReference>
<dbReference type="NCBIfam" id="NF005608">
    <property type="entry name" value="PRK07354.1"/>
    <property type="match status" value="1"/>
</dbReference>
<dbReference type="PANTHER" id="PTHR10031">
    <property type="entry name" value="ATP SYNTHASE LIPID-BINDING PROTEIN, MITOCHONDRIAL"/>
    <property type="match status" value="1"/>
</dbReference>
<dbReference type="PANTHER" id="PTHR10031:SF0">
    <property type="entry name" value="ATPASE PROTEIN 9"/>
    <property type="match status" value="1"/>
</dbReference>
<dbReference type="Pfam" id="PF00137">
    <property type="entry name" value="ATP-synt_C"/>
    <property type="match status" value="1"/>
</dbReference>
<dbReference type="PRINTS" id="PR00124">
    <property type="entry name" value="ATPASEC"/>
</dbReference>
<dbReference type="SUPFAM" id="SSF81333">
    <property type="entry name" value="F1F0 ATP synthase subunit C"/>
    <property type="match status" value="1"/>
</dbReference>
<dbReference type="PROSITE" id="PS00605">
    <property type="entry name" value="ATPASE_C"/>
    <property type="match status" value="1"/>
</dbReference>
<sequence>MNPLISAASVIAAGLAVGLASIGPGVGQGTAAGQAVEGIARQPEAEGKIRGTLLLSLAFMEALTIYGLVVALALLFANPFV</sequence>
<keyword id="KW-0066">ATP synthesis</keyword>
<keyword id="KW-0138">CF(0)</keyword>
<keyword id="KW-0150">Chloroplast</keyword>
<keyword id="KW-0375">Hydrogen ion transport</keyword>
<keyword id="KW-0406">Ion transport</keyword>
<keyword id="KW-0446">Lipid-binding</keyword>
<keyword id="KW-0472">Membrane</keyword>
<keyword id="KW-0934">Plastid</keyword>
<keyword id="KW-0691">RNA editing</keyword>
<keyword id="KW-0793">Thylakoid</keyword>
<keyword id="KW-0812">Transmembrane</keyword>
<keyword id="KW-1133">Transmembrane helix</keyword>
<keyword id="KW-0813">Transport</keyword>